<reference key="1">
    <citation type="journal article" date="1997" name="Microbiology">
        <title>The Bacillus subtilis genome from gerBC (311 degrees) to licR (334 degrees).</title>
        <authorList>
            <person name="Presecan E."/>
            <person name="Moszer I."/>
            <person name="Boursier L."/>
            <person name="Cruz Ramos H."/>
            <person name="De La Fuente V."/>
            <person name="Hullo M.-F."/>
            <person name="Lelong C."/>
            <person name="Schleich S."/>
            <person name="Sekowska A."/>
            <person name="Song B.H."/>
            <person name="Villani G."/>
            <person name="Kunst F."/>
            <person name="Danchin A."/>
            <person name="Glaser P."/>
        </authorList>
    </citation>
    <scope>NUCLEOTIDE SEQUENCE [GENOMIC DNA]</scope>
    <source>
        <strain>168</strain>
    </source>
</reference>
<reference key="2">
    <citation type="journal article" date="1997" name="Nature">
        <title>The complete genome sequence of the Gram-positive bacterium Bacillus subtilis.</title>
        <authorList>
            <person name="Kunst F."/>
            <person name="Ogasawara N."/>
            <person name="Moszer I."/>
            <person name="Albertini A.M."/>
            <person name="Alloni G."/>
            <person name="Azevedo V."/>
            <person name="Bertero M.G."/>
            <person name="Bessieres P."/>
            <person name="Bolotin A."/>
            <person name="Borchert S."/>
            <person name="Borriss R."/>
            <person name="Boursier L."/>
            <person name="Brans A."/>
            <person name="Braun M."/>
            <person name="Brignell S.C."/>
            <person name="Bron S."/>
            <person name="Brouillet S."/>
            <person name="Bruschi C.V."/>
            <person name="Caldwell B."/>
            <person name="Capuano V."/>
            <person name="Carter N.M."/>
            <person name="Choi S.-K."/>
            <person name="Codani J.-J."/>
            <person name="Connerton I.F."/>
            <person name="Cummings N.J."/>
            <person name="Daniel R.A."/>
            <person name="Denizot F."/>
            <person name="Devine K.M."/>
            <person name="Duesterhoeft A."/>
            <person name="Ehrlich S.D."/>
            <person name="Emmerson P.T."/>
            <person name="Entian K.-D."/>
            <person name="Errington J."/>
            <person name="Fabret C."/>
            <person name="Ferrari E."/>
            <person name="Foulger D."/>
            <person name="Fritz C."/>
            <person name="Fujita M."/>
            <person name="Fujita Y."/>
            <person name="Fuma S."/>
            <person name="Galizzi A."/>
            <person name="Galleron N."/>
            <person name="Ghim S.-Y."/>
            <person name="Glaser P."/>
            <person name="Goffeau A."/>
            <person name="Golightly E.J."/>
            <person name="Grandi G."/>
            <person name="Guiseppi G."/>
            <person name="Guy B.J."/>
            <person name="Haga K."/>
            <person name="Haiech J."/>
            <person name="Harwood C.R."/>
            <person name="Henaut A."/>
            <person name="Hilbert H."/>
            <person name="Holsappel S."/>
            <person name="Hosono S."/>
            <person name="Hullo M.-F."/>
            <person name="Itaya M."/>
            <person name="Jones L.-M."/>
            <person name="Joris B."/>
            <person name="Karamata D."/>
            <person name="Kasahara Y."/>
            <person name="Klaerr-Blanchard M."/>
            <person name="Klein C."/>
            <person name="Kobayashi Y."/>
            <person name="Koetter P."/>
            <person name="Koningstein G."/>
            <person name="Krogh S."/>
            <person name="Kumano M."/>
            <person name="Kurita K."/>
            <person name="Lapidus A."/>
            <person name="Lardinois S."/>
            <person name="Lauber J."/>
            <person name="Lazarevic V."/>
            <person name="Lee S.-M."/>
            <person name="Levine A."/>
            <person name="Liu H."/>
            <person name="Masuda S."/>
            <person name="Mauel C."/>
            <person name="Medigue C."/>
            <person name="Medina N."/>
            <person name="Mellado R.P."/>
            <person name="Mizuno M."/>
            <person name="Moestl D."/>
            <person name="Nakai S."/>
            <person name="Noback M."/>
            <person name="Noone D."/>
            <person name="O'Reilly M."/>
            <person name="Ogawa K."/>
            <person name="Ogiwara A."/>
            <person name="Oudega B."/>
            <person name="Park S.-H."/>
            <person name="Parro V."/>
            <person name="Pohl T.M."/>
            <person name="Portetelle D."/>
            <person name="Porwollik S."/>
            <person name="Prescott A.M."/>
            <person name="Presecan E."/>
            <person name="Pujic P."/>
            <person name="Purnelle B."/>
            <person name="Rapoport G."/>
            <person name="Rey M."/>
            <person name="Reynolds S."/>
            <person name="Rieger M."/>
            <person name="Rivolta C."/>
            <person name="Rocha E."/>
            <person name="Roche B."/>
            <person name="Rose M."/>
            <person name="Sadaie Y."/>
            <person name="Sato T."/>
            <person name="Scanlan E."/>
            <person name="Schleich S."/>
            <person name="Schroeter R."/>
            <person name="Scoffone F."/>
            <person name="Sekiguchi J."/>
            <person name="Sekowska A."/>
            <person name="Seror S.J."/>
            <person name="Serror P."/>
            <person name="Shin B.-S."/>
            <person name="Soldo B."/>
            <person name="Sorokin A."/>
            <person name="Tacconi E."/>
            <person name="Takagi T."/>
            <person name="Takahashi H."/>
            <person name="Takemaru K."/>
            <person name="Takeuchi M."/>
            <person name="Tamakoshi A."/>
            <person name="Tanaka T."/>
            <person name="Terpstra P."/>
            <person name="Tognoni A."/>
            <person name="Tosato V."/>
            <person name="Uchiyama S."/>
            <person name="Vandenbol M."/>
            <person name="Vannier F."/>
            <person name="Vassarotti A."/>
            <person name="Viari A."/>
            <person name="Wambutt R."/>
            <person name="Wedler E."/>
            <person name="Wedler H."/>
            <person name="Weitzenegger T."/>
            <person name="Winters P."/>
            <person name="Wipat A."/>
            <person name="Yamamoto H."/>
            <person name="Yamane K."/>
            <person name="Yasumoto K."/>
            <person name="Yata K."/>
            <person name="Yoshida K."/>
            <person name="Yoshikawa H.-F."/>
            <person name="Zumstein E."/>
            <person name="Yoshikawa H."/>
            <person name="Danchin A."/>
        </authorList>
    </citation>
    <scope>NUCLEOTIDE SEQUENCE [LARGE SCALE GENOMIC DNA]</scope>
    <source>
        <strain>168</strain>
    </source>
</reference>
<reference key="3">
    <citation type="journal article" date="2009" name="Microbiology">
        <title>From a consortium sequence to a unified sequence: the Bacillus subtilis 168 reference genome a decade later.</title>
        <authorList>
            <person name="Barbe V."/>
            <person name="Cruveiller S."/>
            <person name="Kunst F."/>
            <person name="Lenoble P."/>
            <person name="Meurice G."/>
            <person name="Sekowska A."/>
            <person name="Vallenet D."/>
            <person name="Wang T."/>
            <person name="Moszer I."/>
            <person name="Medigue C."/>
            <person name="Danchin A."/>
        </authorList>
    </citation>
    <scope>SEQUENCE REVISION TO 330</scope>
</reference>
<name>YWTG_BACSU</name>
<evidence type="ECO:0000255" key="1"/>
<evidence type="ECO:0000256" key="2">
    <source>
        <dbReference type="SAM" id="MobiDB-lite"/>
    </source>
</evidence>
<evidence type="ECO:0000305" key="3"/>
<protein>
    <recommendedName>
        <fullName>Putative metabolite transport protein YwtG</fullName>
    </recommendedName>
</protein>
<feature type="chain" id="PRO_0000377718" description="Putative metabolite transport protein YwtG">
    <location>
        <begin position="1"/>
        <end position="457"/>
    </location>
</feature>
<feature type="transmembrane region" description="Helical" evidence="1">
    <location>
        <begin position="7"/>
        <end position="27"/>
    </location>
</feature>
<feature type="transmembrane region" description="Helical" evidence="1">
    <location>
        <begin position="38"/>
        <end position="58"/>
    </location>
</feature>
<feature type="transmembrane region" description="Helical" evidence="1">
    <location>
        <begin position="75"/>
        <end position="95"/>
    </location>
</feature>
<feature type="transmembrane region" description="Helical" evidence="1">
    <location>
        <begin position="97"/>
        <end position="117"/>
    </location>
</feature>
<feature type="transmembrane region" description="Helical" evidence="1">
    <location>
        <begin position="136"/>
        <end position="156"/>
    </location>
</feature>
<feature type="transmembrane region" description="Helical" evidence="1">
    <location>
        <begin position="163"/>
        <end position="183"/>
    </location>
</feature>
<feature type="transmembrane region" description="Helical" evidence="1">
    <location>
        <begin position="240"/>
        <end position="260"/>
    </location>
</feature>
<feature type="transmembrane region" description="Helical" evidence="1">
    <location>
        <begin position="276"/>
        <end position="296"/>
    </location>
</feature>
<feature type="transmembrane region" description="Helical" evidence="1">
    <location>
        <begin position="309"/>
        <end position="329"/>
    </location>
</feature>
<feature type="transmembrane region" description="Helical" evidence="1">
    <location>
        <begin position="340"/>
        <end position="360"/>
    </location>
</feature>
<feature type="transmembrane region" description="Helical" evidence="1">
    <location>
        <begin position="377"/>
        <end position="397"/>
    </location>
</feature>
<feature type="transmembrane region" description="Helical" evidence="1">
    <location>
        <begin position="400"/>
        <end position="420"/>
    </location>
</feature>
<feature type="region of interest" description="Disordered" evidence="2">
    <location>
        <begin position="438"/>
        <end position="457"/>
    </location>
</feature>
<feature type="sequence conflict" description="In Ref. 1; CAB07473." evidence="3" ref="1">
    <original>D</original>
    <variation>N</variation>
    <location>
        <position position="330"/>
    </location>
</feature>
<organism>
    <name type="scientific">Bacillus subtilis (strain 168)</name>
    <dbReference type="NCBI Taxonomy" id="224308"/>
    <lineage>
        <taxon>Bacteria</taxon>
        <taxon>Bacillati</taxon>
        <taxon>Bacillota</taxon>
        <taxon>Bacilli</taxon>
        <taxon>Bacillales</taxon>
        <taxon>Bacillaceae</taxon>
        <taxon>Bacillus</taxon>
    </lineage>
</organism>
<accession>C0SPB2</accession>
<accession>P96742</accession>
<accession>Q795D0</accession>
<comment type="subcellular location">
    <subcellularLocation>
        <location evidence="3">Cell membrane</location>
        <topology evidence="3">Multi-pass membrane protein</topology>
    </subcellularLocation>
</comment>
<comment type="similarity">
    <text evidence="3">Belongs to the major facilitator superfamily. Sugar transporter (TC 2.A.1.1) family.</text>
</comment>
<proteinExistence type="inferred from homology"/>
<sequence>MKKQSNIWLYFFGALGGALYGYDTGVISGAILFMKKELGLNAFTEGLVVSSLLVGAILGSGAAGKLTDRFGRKKAIMAAALLFCIGGLGVALAPNTGVMVLFRIILGLAVGTSTTIVPLYLSELAPKHKRGALSSLNQLMITVGILLSYIVNYIFADAEAWRWMLGLAAVPSLLLLIGILFMPESPRWLFTNGEESKAKKILEKLRGTKDIDQEIHDIKEAEKQDEGGLKELFDPWVRPALIAGLGLAFLQQFIGTNTIIYYAPKTFTNVGFGNSASILGTVGIGTVNVLMTLVAIKIIDKIGRKPLLLFGNAGMVISLIVLALVNLFFDNTPAASWTTVICLGVFIVVFAVSWGPVVWVMLPELFPLHVRGIGTGVSTLMLHVGTLIVSLTYPILMEAIGISYLFLIYAAIGIMAFLFVRFKVTETKGRSLEEIEQDLRDKNGQGGAAGKQQTVGT</sequence>
<keyword id="KW-1003">Cell membrane</keyword>
<keyword id="KW-0472">Membrane</keyword>
<keyword id="KW-1185">Reference proteome</keyword>
<keyword id="KW-0812">Transmembrane</keyword>
<keyword id="KW-1133">Transmembrane helix</keyword>
<keyword id="KW-0813">Transport</keyword>
<gene>
    <name type="primary">ywtG</name>
    <name type="ordered locus">BSU35830</name>
</gene>
<dbReference type="EMBL" id="Z92954">
    <property type="protein sequence ID" value="CAB07473.1"/>
    <property type="molecule type" value="Genomic_DNA"/>
</dbReference>
<dbReference type="EMBL" id="AL009126">
    <property type="protein sequence ID" value="CAB15600.2"/>
    <property type="molecule type" value="Genomic_DNA"/>
</dbReference>
<dbReference type="PIR" id="E70070">
    <property type="entry name" value="E70070"/>
</dbReference>
<dbReference type="RefSeq" id="NP_391464.2">
    <property type="nucleotide sequence ID" value="NC_000964.3"/>
</dbReference>
<dbReference type="RefSeq" id="WP_003243731.1">
    <property type="nucleotide sequence ID" value="NZ_OZ025638.1"/>
</dbReference>
<dbReference type="SMR" id="C0SPB2"/>
<dbReference type="FunCoup" id="C0SPB2">
    <property type="interactions" value="484"/>
</dbReference>
<dbReference type="STRING" id="224308.BSU35830"/>
<dbReference type="PaxDb" id="224308-BSU35830"/>
<dbReference type="EnsemblBacteria" id="CAB15600">
    <property type="protein sequence ID" value="CAB15600"/>
    <property type="gene ID" value="BSU_35830"/>
</dbReference>
<dbReference type="GeneID" id="936832"/>
<dbReference type="KEGG" id="bsu:BSU35830"/>
<dbReference type="PATRIC" id="fig|224308.179.peg.3879"/>
<dbReference type="eggNOG" id="COG2814">
    <property type="taxonomic scope" value="Bacteria"/>
</dbReference>
<dbReference type="InParanoid" id="C0SPB2"/>
<dbReference type="OrthoDB" id="9783823at2"/>
<dbReference type="PhylomeDB" id="C0SPB2"/>
<dbReference type="BioCyc" id="BSUB:BSU35830-MONOMER"/>
<dbReference type="Proteomes" id="UP000001570">
    <property type="component" value="Chromosome"/>
</dbReference>
<dbReference type="GO" id="GO:0016020">
    <property type="term" value="C:membrane"/>
    <property type="evidence" value="ECO:0000318"/>
    <property type="project" value="GO_Central"/>
</dbReference>
<dbReference type="GO" id="GO:0005886">
    <property type="term" value="C:plasma membrane"/>
    <property type="evidence" value="ECO:0007669"/>
    <property type="project" value="UniProtKB-SubCell"/>
</dbReference>
<dbReference type="GO" id="GO:0055056">
    <property type="term" value="F:D-glucose transmembrane transporter activity"/>
    <property type="evidence" value="ECO:0000318"/>
    <property type="project" value="GO_Central"/>
</dbReference>
<dbReference type="GO" id="GO:1904659">
    <property type="term" value="P:D-glucose transmembrane transport"/>
    <property type="evidence" value="ECO:0000318"/>
    <property type="project" value="GO_Central"/>
</dbReference>
<dbReference type="CDD" id="cd17359">
    <property type="entry name" value="MFS_XylE_like"/>
    <property type="match status" value="1"/>
</dbReference>
<dbReference type="FunFam" id="1.20.1250.20:FF:000073">
    <property type="entry name" value="MFS myo-inositol transporter, putative"/>
    <property type="match status" value="1"/>
</dbReference>
<dbReference type="Gene3D" id="1.20.1250.20">
    <property type="entry name" value="MFS general substrate transporter like domains"/>
    <property type="match status" value="1"/>
</dbReference>
<dbReference type="InterPro" id="IPR020846">
    <property type="entry name" value="MFS_dom"/>
</dbReference>
<dbReference type="InterPro" id="IPR005828">
    <property type="entry name" value="MFS_sugar_transport-like"/>
</dbReference>
<dbReference type="InterPro" id="IPR050820">
    <property type="entry name" value="MFS_Sugar_Transporter"/>
</dbReference>
<dbReference type="InterPro" id="IPR036259">
    <property type="entry name" value="MFS_trans_sf"/>
</dbReference>
<dbReference type="InterPro" id="IPR003663">
    <property type="entry name" value="Sugar/inositol_transpt"/>
</dbReference>
<dbReference type="InterPro" id="IPR005829">
    <property type="entry name" value="Sugar_transporter_CS"/>
</dbReference>
<dbReference type="InterPro" id="IPR047984">
    <property type="entry name" value="XylE-like"/>
</dbReference>
<dbReference type="NCBIfam" id="TIGR00879">
    <property type="entry name" value="SP"/>
    <property type="match status" value="1"/>
</dbReference>
<dbReference type="PANTHER" id="PTHR48023">
    <property type="entry name" value="D-XYLOSE-PROTON SYMPORTER-LIKE 2"/>
    <property type="match status" value="1"/>
</dbReference>
<dbReference type="PANTHER" id="PTHR48023:SF4">
    <property type="entry name" value="D-XYLOSE-PROTON SYMPORTER-LIKE 2"/>
    <property type="match status" value="1"/>
</dbReference>
<dbReference type="Pfam" id="PF00083">
    <property type="entry name" value="Sugar_tr"/>
    <property type="match status" value="1"/>
</dbReference>
<dbReference type="PRINTS" id="PR00171">
    <property type="entry name" value="SUGRTRNSPORT"/>
</dbReference>
<dbReference type="SUPFAM" id="SSF103473">
    <property type="entry name" value="MFS general substrate transporter"/>
    <property type="match status" value="1"/>
</dbReference>
<dbReference type="PROSITE" id="PS50850">
    <property type="entry name" value="MFS"/>
    <property type="match status" value="1"/>
</dbReference>
<dbReference type="PROSITE" id="PS00216">
    <property type="entry name" value="SUGAR_TRANSPORT_1"/>
    <property type="match status" value="1"/>
</dbReference>
<dbReference type="PROSITE" id="PS00217">
    <property type="entry name" value="SUGAR_TRANSPORT_2"/>
    <property type="match status" value="1"/>
</dbReference>